<proteinExistence type="inferred from homology"/>
<evidence type="ECO:0000255" key="1">
    <source>
        <dbReference type="HAMAP-Rule" id="MF_01367"/>
    </source>
</evidence>
<evidence type="ECO:0000305" key="2"/>
<protein>
    <recommendedName>
        <fullName evidence="1">Large ribosomal subunit protein uL14</fullName>
    </recommendedName>
    <alternativeName>
        <fullName evidence="2">50S ribosomal protein L14</fullName>
    </alternativeName>
</protein>
<sequence>MIQTETRLKVADNSGAKIVYCIKVLGGSRRRYATVGDVIVVSVKEAIPNSKVKKGDVLKAVIVRTKKEIKRPDGSYIRFDENSAVLISGNNEPLGTRIFGPVARELRAKRFMKIVSLAPEVL</sequence>
<feature type="chain" id="PRO_1000144258" description="Large ribosomal subunit protein uL14">
    <location>
        <begin position="1"/>
        <end position="122"/>
    </location>
</feature>
<organism>
    <name type="scientific">Desulfosudis oleivorans (strain DSM 6200 / JCM 39069 / Hxd3)</name>
    <name type="common">Desulfococcus oleovorans</name>
    <dbReference type="NCBI Taxonomy" id="96561"/>
    <lineage>
        <taxon>Bacteria</taxon>
        <taxon>Pseudomonadati</taxon>
        <taxon>Thermodesulfobacteriota</taxon>
        <taxon>Desulfobacteria</taxon>
        <taxon>Desulfobacterales</taxon>
        <taxon>Desulfosudaceae</taxon>
        <taxon>Desulfosudis</taxon>
    </lineage>
</organism>
<dbReference type="EMBL" id="CP000859">
    <property type="protein sequence ID" value="ABW66528.1"/>
    <property type="molecule type" value="Genomic_DNA"/>
</dbReference>
<dbReference type="RefSeq" id="WP_012174146.1">
    <property type="nucleotide sequence ID" value="NC_009943.1"/>
</dbReference>
<dbReference type="SMR" id="A8ZV67"/>
<dbReference type="STRING" id="96561.Dole_0718"/>
<dbReference type="KEGG" id="dol:Dole_0718"/>
<dbReference type="eggNOG" id="COG0093">
    <property type="taxonomic scope" value="Bacteria"/>
</dbReference>
<dbReference type="HOGENOM" id="CLU_095071_2_1_7"/>
<dbReference type="OrthoDB" id="9806379at2"/>
<dbReference type="Proteomes" id="UP000008561">
    <property type="component" value="Chromosome"/>
</dbReference>
<dbReference type="GO" id="GO:0022625">
    <property type="term" value="C:cytosolic large ribosomal subunit"/>
    <property type="evidence" value="ECO:0007669"/>
    <property type="project" value="TreeGrafter"/>
</dbReference>
<dbReference type="GO" id="GO:0070180">
    <property type="term" value="F:large ribosomal subunit rRNA binding"/>
    <property type="evidence" value="ECO:0007669"/>
    <property type="project" value="TreeGrafter"/>
</dbReference>
<dbReference type="GO" id="GO:0003735">
    <property type="term" value="F:structural constituent of ribosome"/>
    <property type="evidence" value="ECO:0007669"/>
    <property type="project" value="InterPro"/>
</dbReference>
<dbReference type="GO" id="GO:0006412">
    <property type="term" value="P:translation"/>
    <property type="evidence" value="ECO:0007669"/>
    <property type="project" value="UniProtKB-UniRule"/>
</dbReference>
<dbReference type="CDD" id="cd00337">
    <property type="entry name" value="Ribosomal_uL14"/>
    <property type="match status" value="1"/>
</dbReference>
<dbReference type="FunFam" id="2.40.150.20:FF:000001">
    <property type="entry name" value="50S ribosomal protein L14"/>
    <property type="match status" value="1"/>
</dbReference>
<dbReference type="Gene3D" id="2.40.150.20">
    <property type="entry name" value="Ribosomal protein L14"/>
    <property type="match status" value="1"/>
</dbReference>
<dbReference type="HAMAP" id="MF_01367">
    <property type="entry name" value="Ribosomal_uL14"/>
    <property type="match status" value="1"/>
</dbReference>
<dbReference type="InterPro" id="IPR000218">
    <property type="entry name" value="Ribosomal_uL14"/>
</dbReference>
<dbReference type="InterPro" id="IPR005745">
    <property type="entry name" value="Ribosomal_uL14_bac-type"/>
</dbReference>
<dbReference type="InterPro" id="IPR019972">
    <property type="entry name" value="Ribosomal_uL14_CS"/>
</dbReference>
<dbReference type="InterPro" id="IPR036853">
    <property type="entry name" value="Ribosomal_uL14_sf"/>
</dbReference>
<dbReference type="NCBIfam" id="TIGR01067">
    <property type="entry name" value="rplN_bact"/>
    <property type="match status" value="1"/>
</dbReference>
<dbReference type="PANTHER" id="PTHR11761">
    <property type="entry name" value="50S/60S RIBOSOMAL PROTEIN L14/L23"/>
    <property type="match status" value="1"/>
</dbReference>
<dbReference type="PANTHER" id="PTHR11761:SF3">
    <property type="entry name" value="LARGE RIBOSOMAL SUBUNIT PROTEIN UL14M"/>
    <property type="match status" value="1"/>
</dbReference>
<dbReference type="Pfam" id="PF00238">
    <property type="entry name" value="Ribosomal_L14"/>
    <property type="match status" value="1"/>
</dbReference>
<dbReference type="SMART" id="SM01374">
    <property type="entry name" value="Ribosomal_L14"/>
    <property type="match status" value="1"/>
</dbReference>
<dbReference type="SUPFAM" id="SSF50193">
    <property type="entry name" value="Ribosomal protein L14"/>
    <property type="match status" value="1"/>
</dbReference>
<dbReference type="PROSITE" id="PS00049">
    <property type="entry name" value="RIBOSOMAL_L14"/>
    <property type="match status" value="1"/>
</dbReference>
<keyword id="KW-1185">Reference proteome</keyword>
<keyword id="KW-0687">Ribonucleoprotein</keyword>
<keyword id="KW-0689">Ribosomal protein</keyword>
<keyword id="KW-0694">RNA-binding</keyword>
<keyword id="KW-0699">rRNA-binding</keyword>
<reference key="1">
    <citation type="submission" date="2007-10" db="EMBL/GenBank/DDBJ databases">
        <title>Complete sequence of Desulfococcus oleovorans Hxd3.</title>
        <authorList>
            <consortium name="US DOE Joint Genome Institute"/>
            <person name="Copeland A."/>
            <person name="Lucas S."/>
            <person name="Lapidus A."/>
            <person name="Barry K."/>
            <person name="Glavina del Rio T."/>
            <person name="Dalin E."/>
            <person name="Tice H."/>
            <person name="Pitluck S."/>
            <person name="Kiss H."/>
            <person name="Brettin T."/>
            <person name="Bruce D."/>
            <person name="Detter J.C."/>
            <person name="Han C."/>
            <person name="Schmutz J."/>
            <person name="Larimer F."/>
            <person name="Land M."/>
            <person name="Hauser L."/>
            <person name="Kyrpides N."/>
            <person name="Kim E."/>
            <person name="Wawrik B."/>
            <person name="Richardson P."/>
        </authorList>
    </citation>
    <scope>NUCLEOTIDE SEQUENCE [LARGE SCALE GENOMIC DNA]</scope>
    <source>
        <strain>DSM 6200 / JCM 39069 / Hxd3</strain>
    </source>
</reference>
<accession>A8ZV67</accession>
<name>RL14_DESOH</name>
<comment type="function">
    <text evidence="1">Binds to 23S rRNA. Forms part of two intersubunit bridges in the 70S ribosome.</text>
</comment>
<comment type="subunit">
    <text evidence="1">Part of the 50S ribosomal subunit. Forms a cluster with proteins L3 and L19. In the 70S ribosome, L14 and L19 interact and together make contacts with the 16S rRNA in bridges B5 and B8.</text>
</comment>
<comment type="similarity">
    <text evidence="1">Belongs to the universal ribosomal protein uL14 family.</text>
</comment>
<gene>
    <name evidence="1" type="primary">rplN</name>
    <name type="ordered locus">Dole_0718</name>
</gene>